<organism>
    <name type="scientific">Bacteroides thetaiotaomicron (strain ATCC 29148 / DSM 2079 / JCM 5827 / CCUG 10774 / NCTC 10582 / VPI-5482 / E50)</name>
    <dbReference type="NCBI Taxonomy" id="226186"/>
    <lineage>
        <taxon>Bacteria</taxon>
        <taxon>Pseudomonadati</taxon>
        <taxon>Bacteroidota</taxon>
        <taxon>Bacteroidia</taxon>
        <taxon>Bacteroidales</taxon>
        <taxon>Bacteroidaceae</taxon>
        <taxon>Bacteroides</taxon>
    </lineage>
</organism>
<protein>
    <recommendedName>
        <fullName evidence="1">Formate--tetrahydrofolate ligase</fullName>
        <ecNumber evidence="1">6.3.4.3</ecNumber>
    </recommendedName>
    <alternativeName>
        <fullName evidence="1">Formyltetrahydrofolate synthetase</fullName>
        <shortName evidence="1">FHS</shortName>
        <shortName evidence="1">FTHFS</shortName>
    </alternativeName>
</protein>
<dbReference type="EC" id="6.3.4.3" evidence="1"/>
<dbReference type="EMBL" id="AE015928">
    <property type="protein sequence ID" value="AAO75844.1"/>
    <property type="molecule type" value="Genomic_DNA"/>
</dbReference>
<dbReference type="RefSeq" id="NP_809650.1">
    <property type="nucleotide sequence ID" value="NC_004663.1"/>
</dbReference>
<dbReference type="RefSeq" id="WP_011107423.1">
    <property type="nucleotide sequence ID" value="NC_004663.1"/>
</dbReference>
<dbReference type="SMR" id="Q8A9S8"/>
<dbReference type="STRING" id="226186.BT_0737"/>
<dbReference type="PaxDb" id="226186-BT_0737"/>
<dbReference type="EnsemblBacteria" id="AAO75844">
    <property type="protein sequence ID" value="AAO75844"/>
    <property type="gene ID" value="BT_0737"/>
</dbReference>
<dbReference type="GeneID" id="60926705"/>
<dbReference type="KEGG" id="bth:BT_0737"/>
<dbReference type="PATRIC" id="fig|226186.12.peg.752"/>
<dbReference type="eggNOG" id="COG2759">
    <property type="taxonomic scope" value="Bacteria"/>
</dbReference>
<dbReference type="HOGENOM" id="CLU_003601_3_3_10"/>
<dbReference type="InParanoid" id="Q8A9S8"/>
<dbReference type="OrthoDB" id="9761733at2"/>
<dbReference type="UniPathway" id="UPA00193"/>
<dbReference type="Proteomes" id="UP000001414">
    <property type="component" value="Chromosome"/>
</dbReference>
<dbReference type="GO" id="GO:0005524">
    <property type="term" value="F:ATP binding"/>
    <property type="evidence" value="ECO:0007669"/>
    <property type="project" value="UniProtKB-UniRule"/>
</dbReference>
<dbReference type="GO" id="GO:0004329">
    <property type="term" value="F:formate-tetrahydrofolate ligase activity"/>
    <property type="evidence" value="ECO:0007669"/>
    <property type="project" value="UniProtKB-UniRule"/>
</dbReference>
<dbReference type="GO" id="GO:0035999">
    <property type="term" value="P:tetrahydrofolate interconversion"/>
    <property type="evidence" value="ECO:0007669"/>
    <property type="project" value="UniProtKB-UniRule"/>
</dbReference>
<dbReference type="CDD" id="cd00477">
    <property type="entry name" value="FTHFS"/>
    <property type="match status" value="1"/>
</dbReference>
<dbReference type="FunFam" id="3.30.1510.10:FF:000001">
    <property type="entry name" value="Formate--tetrahydrofolate ligase"/>
    <property type="match status" value="1"/>
</dbReference>
<dbReference type="Gene3D" id="3.30.1510.10">
    <property type="entry name" value="Domain 2, N(10)-formyltetrahydrofolate synthetase"/>
    <property type="match status" value="1"/>
</dbReference>
<dbReference type="Gene3D" id="3.10.410.10">
    <property type="entry name" value="Formyltetrahydrofolate synthetase, domain 3"/>
    <property type="match status" value="1"/>
</dbReference>
<dbReference type="Gene3D" id="3.40.50.300">
    <property type="entry name" value="P-loop containing nucleotide triphosphate hydrolases"/>
    <property type="match status" value="1"/>
</dbReference>
<dbReference type="HAMAP" id="MF_01543">
    <property type="entry name" value="FTHFS"/>
    <property type="match status" value="1"/>
</dbReference>
<dbReference type="InterPro" id="IPR000559">
    <property type="entry name" value="Formate_THF_ligase"/>
</dbReference>
<dbReference type="InterPro" id="IPR020628">
    <property type="entry name" value="Formate_THF_ligase_CS"/>
</dbReference>
<dbReference type="InterPro" id="IPR027417">
    <property type="entry name" value="P-loop_NTPase"/>
</dbReference>
<dbReference type="NCBIfam" id="NF010030">
    <property type="entry name" value="PRK13505.1"/>
    <property type="match status" value="1"/>
</dbReference>
<dbReference type="Pfam" id="PF01268">
    <property type="entry name" value="FTHFS"/>
    <property type="match status" value="1"/>
</dbReference>
<dbReference type="SUPFAM" id="SSF52540">
    <property type="entry name" value="P-loop containing nucleoside triphosphate hydrolases"/>
    <property type="match status" value="1"/>
</dbReference>
<dbReference type="PROSITE" id="PS00721">
    <property type="entry name" value="FTHFS_1"/>
    <property type="match status" value="1"/>
</dbReference>
<dbReference type="PROSITE" id="PS00722">
    <property type="entry name" value="FTHFS_2"/>
    <property type="match status" value="1"/>
</dbReference>
<feature type="chain" id="PRO_0000199335" description="Formate--tetrahydrofolate ligase">
    <location>
        <begin position="1"/>
        <end position="555"/>
    </location>
</feature>
<feature type="binding site" evidence="1">
    <location>
        <begin position="64"/>
        <end position="71"/>
    </location>
    <ligand>
        <name>ATP</name>
        <dbReference type="ChEBI" id="CHEBI:30616"/>
    </ligand>
</feature>
<gene>
    <name evidence="1" type="primary">fhs</name>
    <name type="ordered locus">BT_0737</name>
</gene>
<reference key="1">
    <citation type="journal article" date="2003" name="Science">
        <title>A genomic view of the human-Bacteroides thetaiotaomicron symbiosis.</title>
        <authorList>
            <person name="Xu J."/>
            <person name="Bjursell M.K."/>
            <person name="Himrod J."/>
            <person name="Deng S."/>
            <person name="Carmichael L.K."/>
            <person name="Chiang H.C."/>
            <person name="Hooper L.V."/>
            <person name="Gordon J.I."/>
        </authorList>
    </citation>
    <scope>NUCLEOTIDE SEQUENCE [LARGE SCALE GENOMIC DNA]</scope>
    <source>
        <strain>ATCC 29148 / DSM 2079 / JCM 5827 / CCUG 10774 / NCTC 10582 / VPI-5482 / E50</strain>
    </source>
</reference>
<accession>Q8A9S8</accession>
<sequence>MKSDIEIARSVELKKIKQVAESIGIPREEVENYGRYIAKIPEQLIDEEKVKKSNLVLVTAITATKAGIGKTTVSIGLALGLNKIGKKAIVALREPSLGPCFGMKGGAAGGGYAQVLPMEKINLHFTGDFHAITSAHNMISALLDNYLYQNQAKGFGLKEILWRRVLDVNDRSLRSIVVGLGPKSNGITQESGFDITPASEIMAILCLSKDVEDLRRRIENILLGFTYDDQPFTVKDLGVAGAITVLLKDAIHPNLVQTTEGTAAFVHGGPFANIAHGCNSILATKLAMSFGDYVITEAGFGADLGAEKFYNIKCRKSGLQPKLTVIVATAQGLKMHGGVSLDRIKEPNMEGLKEGLRNLDKHIRNLRSFGQTVVVAFNKFATDTDEEMEMLREHCEQLGVGYAINNAFSDGGDGAVDMARLVVDTIENNPSEPLRYTYKEEDSIQQKIEKVATNLYGASVITYSSIARNRIKLIEKMGITHYPVCIAKTQYSFSADPKIYGAVNNFEFHIKDIVINNGAEMIVAIAGEILRMPGLPKEPQALHIDIVDGEIEGLS</sequence>
<name>FTHS_BACTN</name>
<keyword id="KW-0067">ATP-binding</keyword>
<keyword id="KW-0436">Ligase</keyword>
<keyword id="KW-0547">Nucleotide-binding</keyword>
<keyword id="KW-0554">One-carbon metabolism</keyword>
<keyword id="KW-1185">Reference proteome</keyword>
<comment type="catalytic activity">
    <reaction evidence="1">
        <text>(6S)-5,6,7,8-tetrahydrofolate + formate + ATP = (6R)-10-formyltetrahydrofolate + ADP + phosphate</text>
        <dbReference type="Rhea" id="RHEA:20221"/>
        <dbReference type="ChEBI" id="CHEBI:15740"/>
        <dbReference type="ChEBI" id="CHEBI:30616"/>
        <dbReference type="ChEBI" id="CHEBI:43474"/>
        <dbReference type="ChEBI" id="CHEBI:57453"/>
        <dbReference type="ChEBI" id="CHEBI:195366"/>
        <dbReference type="ChEBI" id="CHEBI:456216"/>
        <dbReference type="EC" id="6.3.4.3"/>
    </reaction>
</comment>
<comment type="pathway">
    <text evidence="1">One-carbon metabolism; tetrahydrofolate interconversion.</text>
</comment>
<comment type="similarity">
    <text evidence="1">Belongs to the formate--tetrahydrofolate ligase family.</text>
</comment>
<proteinExistence type="inferred from homology"/>
<evidence type="ECO:0000255" key="1">
    <source>
        <dbReference type="HAMAP-Rule" id="MF_01543"/>
    </source>
</evidence>